<gene>
    <name evidence="1" type="primary">tpiA</name>
    <name type="ordered locus">USA300HOU_0804</name>
</gene>
<sequence length="253" mass="27262">MRTPIIAGNWKMNKTVQEAKDFVNALPTLPDSKEVESVICAPAIQLDALTTAVKEGKAQGLEIGAQNTYFEDNGAFTGETSPVALADLGVKYVVIGHSERRELFHETDEEINKKAHAIFKHGMTPIICVGETDEERESGKANDVVGEQVKKAVAGLSEDQLKSVVIAYEPIWAIGTGKSSTSEDANEMCAFVRQTIADLSSKEVSEATRIQYGGSVKPNNIKEYMAQTDIDGALVGGASLKVEDFVQLLEGAK</sequence>
<dbReference type="EC" id="5.3.1.1" evidence="1"/>
<dbReference type="EMBL" id="CP000730">
    <property type="protein sequence ID" value="ABX28825.1"/>
    <property type="molecule type" value="Genomic_DNA"/>
</dbReference>
<dbReference type="RefSeq" id="WP_001260089.1">
    <property type="nucleotide sequence ID" value="NC_010079.1"/>
</dbReference>
<dbReference type="SMR" id="A8Z1A2"/>
<dbReference type="KEGG" id="sax:USA300HOU_0804"/>
<dbReference type="HOGENOM" id="CLU_024251_2_3_9"/>
<dbReference type="UniPathway" id="UPA00109">
    <property type="reaction ID" value="UER00189"/>
</dbReference>
<dbReference type="UniPathway" id="UPA00138"/>
<dbReference type="GO" id="GO:0005829">
    <property type="term" value="C:cytosol"/>
    <property type="evidence" value="ECO:0007669"/>
    <property type="project" value="TreeGrafter"/>
</dbReference>
<dbReference type="GO" id="GO:0004807">
    <property type="term" value="F:triose-phosphate isomerase activity"/>
    <property type="evidence" value="ECO:0007669"/>
    <property type="project" value="UniProtKB-UniRule"/>
</dbReference>
<dbReference type="GO" id="GO:0006094">
    <property type="term" value="P:gluconeogenesis"/>
    <property type="evidence" value="ECO:0007669"/>
    <property type="project" value="UniProtKB-UniRule"/>
</dbReference>
<dbReference type="GO" id="GO:0046166">
    <property type="term" value="P:glyceraldehyde-3-phosphate biosynthetic process"/>
    <property type="evidence" value="ECO:0007669"/>
    <property type="project" value="TreeGrafter"/>
</dbReference>
<dbReference type="GO" id="GO:0019563">
    <property type="term" value="P:glycerol catabolic process"/>
    <property type="evidence" value="ECO:0007669"/>
    <property type="project" value="TreeGrafter"/>
</dbReference>
<dbReference type="GO" id="GO:0006096">
    <property type="term" value="P:glycolytic process"/>
    <property type="evidence" value="ECO:0007669"/>
    <property type="project" value="UniProtKB-UniRule"/>
</dbReference>
<dbReference type="CDD" id="cd00311">
    <property type="entry name" value="TIM"/>
    <property type="match status" value="1"/>
</dbReference>
<dbReference type="FunFam" id="3.20.20.70:FF:000016">
    <property type="entry name" value="Triosephosphate isomerase"/>
    <property type="match status" value="1"/>
</dbReference>
<dbReference type="Gene3D" id="3.20.20.70">
    <property type="entry name" value="Aldolase class I"/>
    <property type="match status" value="1"/>
</dbReference>
<dbReference type="HAMAP" id="MF_00147_B">
    <property type="entry name" value="TIM_B"/>
    <property type="match status" value="1"/>
</dbReference>
<dbReference type="InterPro" id="IPR013785">
    <property type="entry name" value="Aldolase_TIM"/>
</dbReference>
<dbReference type="InterPro" id="IPR035990">
    <property type="entry name" value="TIM_sf"/>
</dbReference>
<dbReference type="InterPro" id="IPR022896">
    <property type="entry name" value="TrioseP_Isoase_bac/euk"/>
</dbReference>
<dbReference type="InterPro" id="IPR000652">
    <property type="entry name" value="Triosephosphate_isomerase"/>
</dbReference>
<dbReference type="InterPro" id="IPR020861">
    <property type="entry name" value="Triosephosphate_isomerase_AS"/>
</dbReference>
<dbReference type="NCBIfam" id="TIGR00419">
    <property type="entry name" value="tim"/>
    <property type="match status" value="1"/>
</dbReference>
<dbReference type="PANTHER" id="PTHR21139">
    <property type="entry name" value="TRIOSEPHOSPHATE ISOMERASE"/>
    <property type="match status" value="1"/>
</dbReference>
<dbReference type="PANTHER" id="PTHR21139:SF42">
    <property type="entry name" value="TRIOSEPHOSPHATE ISOMERASE"/>
    <property type="match status" value="1"/>
</dbReference>
<dbReference type="Pfam" id="PF00121">
    <property type="entry name" value="TIM"/>
    <property type="match status" value="1"/>
</dbReference>
<dbReference type="SUPFAM" id="SSF51351">
    <property type="entry name" value="Triosephosphate isomerase (TIM)"/>
    <property type="match status" value="1"/>
</dbReference>
<dbReference type="PROSITE" id="PS00171">
    <property type="entry name" value="TIM_1"/>
    <property type="match status" value="1"/>
</dbReference>
<dbReference type="PROSITE" id="PS51440">
    <property type="entry name" value="TIM_2"/>
    <property type="match status" value="1"/>
</dbReference>
<accession>A8Z1A2</accession>
<comment type="function">
    <text evidence="1">Involved in the gluconeogenesis. Catalyzes stereospecifically the conversion of dihydroxyacetone phosphate (DHAP) to D-glyceraldehyde-3-phosphate (G3P).</text>
</comment>
<comment type="catalytic activity">
    <reaction evidence="1">
        <text>D-glyceraldehyde 3-phosphate = dihydroxyacetone phosphate</text>
        <dbReference type="Rhea" id="RHEA:18585"/>
        <dbReference type="ChEBI" id="CHEBI:57642"/>
        <dbReference type="ChEBI" id="CHEBI:59776"/>
        <dbReference type="EC" id="5.3.1.1"/>
    </reaction>
</comment>
<comment type="pathway">
    <text evidence="1">Carbohydrate biosynthesis; gluconeogenesis.</text>
</comment>
<comment type="pathway">
    <text evidence="1">Carbohydrate degradation; glycolysis; D-glyceraldehyde 3-phosphate from glycerone phosphate: step 1/1.</text>
</comment>
<comment type="subunit">
    <text evidence="1">Homodimer.</text>
</comment>
<comment type="subcellular location">
    <subcellularLocation>
        <location evidence="1">Cytoplasm</location>
    </subcellularLocation>
</comment>
<comment type="similarity">
    <text evidence="1">Belongs to the triosephosphate isomerase family.</text>
</comment>
<feature type="chain" id="PRO_1000076665" description="Triosephosphate isomerase">
    <location>
        <begin position="1"/>
        <end position="253"/>
    </location>
</feature>
<feature type="active site" description="Electrophile" evidence="1">
    <location>
        <position position="97"/>
    </location>
</feature>
<feature type="active site" description="Proton acceptor" evidence="1">
    <location>
        <position position="169"/>
    </location>
</feature>
<feature type="binding site" evidence="1">
    <location>
        <begin position="9"/>
        <end position="11"/>
    </location>
    <ligand>
        <name>substrate</name>
    </ligand>
</feature>
<feature type="binding site" evidence="1">
    <location>
        <position position="175"/>
    </location>
    <ligand>
        <name>substrate</name>
    </ligand>
</feature>
<feature type="binding site" evidence="1">
    <location>
        <position position="215"/>
    </location>
    <ligand>
        <name>substrate</name>
    </ligand>
</feature>
<feature type="binding site" evidence="1">
    <location>
        <begin position="236"/>
        <end position="237"/>
    </location>
    <ligand>
        <name>substrate</name>
    </ligand>
</feature>
<proteinExistence type="inferred from homology"/>
<keyword id="KW-0963">Cytoplasm</keyword>
<keyword id="KW-0312">Gluconeogenesis</keyword>
<keyword id="KW-0324">Glycolysis</keyword>
<keyword id="KW-0413">Isomerase</keyword>
<evidence type="ECO:0000255" key="1">
    <source>
        <dbReference type="HAMAP-Rule" id="MF_00147"/>
    </source>
</evidence>
<name>TPIS_STAAT</name>
<reference key="1">
    <citation type="journal article" date="2007" name="BMC Microbiol.">
        <title>Subtle genetic changes enhance virulence of methicillin resistant and sensitive Staphylococcus aureus.</title>
        <authorList>
            <person name="Highlander S.K."/>
            <person name="Hulten K.G."/>
            <person name="Qin X."/>
            <person name="Jiang H."/>
            <person name="Yerrapragada S."/>
            <person name="Mason E.O. Jr."/>
            <person name="Shang Y."/>
            <person name="Williams T.M."/>
            <person name="Fortunov R.M."/>
            <person name="Liu Y."/>
            <person name="Igboeli O."/>
            <person name="Petrosino J."/>
            <person name="Tirumalai M."/>
            <person name="Uzman A."/>
            <person name="Fox G.E."/>
            <person name="Cardenas A.M."/>
            <person name="Muzny D.M."/>
            <person name="Hemphill L."/>
            <person name="Ding Y."/>
            <person name="Dugan S."/>
            <person name="Blyth P.R."/>
            <person name="Buhay C.J."/>
            <person name="Dinh H.H."/>
            <person name="Hawes A.C."/>
            <person name="Holder M."/>
            <person name="Kovar C.L."/>
            <person name="Lee S.L."/>
            <person name="Liu W."/>
            <person name="Nazareth L.V."/>
            <person name="Wang Q."/>
            <person name="Zhou J."/>
            <person name="Kaplan S.L."/>
            <person name="Weinstock G.M."/>
        </authorList>
    </citation>
    <scope>NUCLEOTIDE SEQUENCE [LARGE SCALE GENOMIC DNA]</scope>
    <source>
        <strain>USA300 / TCH1516</strain>
    </source>
</reference>
<organism>
    <name type="scientific">Staphylococcus aureus (strain USA300 / TCH1516)</name>
    <dbReference type="NCBI Taxonomy" id="451516"/>
    <lineage>
        <taxon>Bacteria</taxon>
        <taxon>Bacillati</taxon>
        <taxon>Bacillota</taxon>
        <taxon>Bacilli</taxon>
        <taxon>Bacillales</taxon>
        <taxon>Staphylococcaceae</taxon>
        <taxon>Staphylococcus</taxon>
    </lineage>
</organism>
<protein>
    <recommendedName>
        <fullName evidence="1">Triosephosphate isomerase</fullName>
        <shortName evidence="1">TIM</shortName>
        <shortName evidence="1">TPI</shortName>
        <ecNumber evidence="1">5.3.1.1</ecNumber>
    </recommendedName>
    <alternativeName>
        <fullName evidence="1">Triose-phosphate isomerase</fullName>
    </alternativeName>
</protein>